<name>FOLD1_PSESM</name>
<sequence length="284" mass="30280">MTAKLIDGKAIAASLRQQIAKRVAERSQQGLRTPGLAVILVGSDPASQVYVSHKRKDCEEVGFISQAYDLPAETTQVALTNLIDRLNEDAAVDGILLQLPLPAHLDASLLLERIRPDKDVDGFHPYNVGRLAQRIPLLRPCTPKGIIALLESTGVDLYGLDAVVVGASNIVGRPMAMELLLAGCTVTVTHRFTKDLAGHVSRADLVVVAAGKPGLVKGEWIKPGAIVIDVGINRQDDGKLVGDVVYETALPRAGWITPVPGGVGPMTRACLLENTLYAAETLHD</sequence>
<gene>
    <name evidence="1" type="primary">folD1</name>
    <name type="ordered locus">PSPTO_3733</name>
</gene>
<accession>Q87YR0</accession>
<dbReference type="EC" id="1.5.1.5" evidence="1"/>
<dbReference type="EC" id="3.5.4.9" evidence="1"/>
<dbReference type="EMBL" id="AE016853">
    <property type="protein sequence ID" value="AAO57202.1"/>
    <property type="molecule type" value="Genomic_DNA"/>
</dbReference>
<dbReference type="RefSeq" id="NP_793507.1">
    <property type="nucleotide sequence ID" value="NC_004578.1"/>
</dbReference>
<dbReference type="SMR" id="Q87YR0"/>
<dbReference type="STRING" id="223283.PSPTO_3733"/>
<dbReference type="GeneID" id="1185401"/>
<dbReference type="KEGG" id="pst:PSPTO_3733"/>
<dbReference type="PATRIC" id="fig|223283.9.peg.3825"/>
<dbReference type="eggNOG" id="COG0190">
    <property type="taxonomic scope" value="Bacteria"/>
</dbReference>
<dbReference type="HOGENOM" id="CLU_034045_2_1_6"/>
<dbReference type="OrthoDB" id="9803580at2"/>
<dbReference type="PhylomeDB" id="Q87YR0"/>
<dbReference type="UniPathway" id="UPA00193"/>
<dbReference type="Proteomes" id="UP000002515">
    <property type="component" value="Chromosome"/>
</dbReference>
<dbReference type="GO" id="GO:0005829">
    <property type="term" value="C:cytosol"/>
    <property type="evidence" value="ECO:0007669"/>
    <property type="project" value="TreeGrafter"/>
</dbReference>
<dbReference type="GO" id="GO:0004477">
    <property type="term" value="F:methenyltetrahydrofolate cyclohydrolase activity"/>
    <property type="evidence" value="ECO:0007669"/>
    <property type="project" value="UniProtKB-UniRule"/>
</dbReference>
<dbReference type="GO" id="GO:0004488">
    <property type="term" value="F:methylenetetrahydrofolate dehydrogenase (NADP+) activity"/>
    <property type="evidence" value="ECO:0007669"/>
    <property type="project" value="UniProtKB-UniRule"/>
</dbReference>
<dbReference type="GO" id="GO:0000105">
    <property type="term" value="P:L-histidine biosynthetic process"/>
    <property type="evidence" value="ECO:0007669"/>
    <property type="project" value="UniProtKB-KW"/>
</dbReference>
<dbReference type="GO" id="GO:0009086">
    <property type="term" value="P:methionine biosynthetic process"/>
    <property type="evidence" value="ECO:0007669"/>
    <property type="project" value="UniProtKB-KW"/>
</dbReference>
<dbReference type="GO" id="GO:0006164">
    <property type="term" value="P:purine nucleotide biosynthetic process"/>
    <property type="evidence" value="ECO:0007669"/>
    <property type="project" value="UniProtKB-KW"/>
</dbReference>
<dbReference type="GO" id="GO:0035999">
    <property type="term" value="P:tetrahydrofolate interconversion"/>
    <property type="evidence" value="ECO:0007669"/>
    <property type="project" value="UniProtKB-UniRule"/>
</dbReference>
<dbReference type="CDD" id="cd01080">
    <property type="entry name" value="NAD_bind_m-THF_DH_Cyclohyd"/>
    <property type="match status" value="1"/>
</dbReference>
<dbReference type="FunFam" id="3.40.50.10860:FF:000001">
    <property type="entry name" value="Bifunctional protein FolD"/>
    <property type="match status" value="1"/>
</dbReference>
<dbReference type="FunFam" id="3.40.50.720:FF:000006">
    <property type="entry name" value="Bifunctional protein FolD"/>
    <property type="match status" value="1"/>
</dbReference>
<dbReference type="Gene3D" id="3.40.50.10860">
    <property type="entry name" value="Leucine Dehydrogenase, chain A, domain 1"/>
    <property type="match status" value="1"/>
</dbReference>
<dbReference type="Gene3D" id="3.40.50.720">
    <property type="entry name" value="NAD(P)-binding Rossmann-like Domain"/>
    <property type="match status" value="1"/>
</dbReference>
<dbReference type="HAMAP" id="MF_01576">
    <property type="entry name" value="THF_DHG_CYH"/>
    <property type="match status" value="1"/>
</dbReference>
<dbReference type="InterPro" id="IPR046346">
    <property type="entry name" value="Aminoacid_DH-like_N_sf"/>
</dbReference>
<dbReference type="InterPro" id="IPR036291">
    <property type="entry name" value="NAD(P)-bd_dom_sf"/>
</dbReference>
<dbReference type="InterPro" id="IPR000672">
    <property type="entry name" value="THF_DH/CycHdrlase"/>
</dbReference>
<dbReference type="InterPro" id="IPR020630">
    <property type="entry name" value="THF_DH/CycHdrlase_cat_dom"/>
</dbReference>
<dbReference type="InterPro" id="IPR020631">
    <property type="entry name" value="THF_DH/CycHdrlase_NAD-bd_dom"/>
</dbReference>
<dbReference type="NCBIfam" id="NF008058">
    <property type="entry name" value="PRK10792.1"/>
    <property type="match status" value="1"/>
</dbReference>
<dbReference type="NCBIfam" id="NF010783">
    <property type="entry name" value="PRK14186.1"/>
    <property type="match status" value="1"/>
</dbReference>
<dbReference type="PANTHER" id="PTHR48099:SF5">
    <property type="entry name" value="C-1-TETRAHYDROFOLATE SYNTHASE, CYTOPLASMIC"/>
    <property type="match status" value="1"/>
</dbReference>
<dbReference type="PANTHER" id="PTHR48099">
    <property type="entry name" value="C-1-TETRAHYDROFOLATE SYNTHASE, CYTOPLASMIC-RELATED"/>
    <property type="match status" value="1"/>
</dbReference>
<dbReference type="Pfam" id="PF00763">
    <property type="entry name" value="THF_DHG_CYH"/>
    <property type="match status" value="1"/>
</dbReference>
<dbReference type="Pfam" id="PF02882">
    <property type="entry name" value="THF_DHG_CYH_C"/>
    <property type="match status" value="1"/>
</dbReference>
<dbReference type="PRINTS" id="PR00085">
    <property type="entry name" value="THFDHDRGNASE"/>
</dbReference>
<dbReference type="SUPFAM" id="SSF53223">
    <property type="entry name" value="Aminoacid dehydrogenase-like, N-terminal domain"/>
    <property type="match status" value="1"/>
</dbReference>
<dbReference type="SUPFAM" id="SSF51735">
    <property type="entry name" value="NAD(P)-binding Rossmann-fold domains"/>
    <property type="match status" value="1"/>
</dbReference>
<evidence type="ECO:0000255" key="1">
    <source>
        <dbReference type="HAMAP-Rule" id="MF_01576"/>
    </source>
</evidence>
<comment type="function">
    <text evidence="1">Catalyzes the oxidation of 5,10-methylenetetrahydrofolate to 5,10-methenyltetrahydrofolate and then the hydrolysis of 5,10-methenyltetrahydrofolate to 10-formyltetrahydrofolate.</text>
</comment>
<comment type="catalytic activity">
    <reaction evidence="1">
        <text>(6R)-5,10-methylene-5,6,7,8-tetrahydrofolate + NADP(+) = (6R)-5,10-methenyltetrahydrofolate + NADPH</text>
        <dbReference type="Rhea" id="RHEA:22812"/>
        <dbReference type="ChEBI" id="CHEBI:15636"/>
        <dbReference type="ChEBI" id="CHEBI:57455"/>
        <dbReference type="ChEBI" id="CHEBI:57783"/>
        <dbReference type="ChEBI" id="CHEBI:58349"/>
        <dbReference type="EC" id="1.5.1.5"/>
    </reaction>
</comment>
<comment type="catalytic activity">
    <reaction evidence="1">
        <text>(6R)-5,10-methenyltetrahydrofolate + H2O = (6R)-10-formyltetrahydrofolate + H(+)</text>
        <dbReference type="Rhea" id="RHEA:23700"/>
        <dbReference type="ChEBI" id="CHEBI:15377"/>
        <dbReference type="ChEBI" id="CHEBI:15378"/>
        <dbReference type="ChEBI" id="CHEBI:57455"/>
        <dbReference type="ChEBI" id="CHEBI:195366"/>
        <dbReference type="EC" id="3.5.4.9"/>
    </reaction>
</comment>
<comment type="pathway">
    <text evidence="1">One-carbon metabolism; tetrahydrofolate interconversion.</text>
</comment>
<comment type="subunit">
    <text evidence="1">Homodimer.</text>
</comment>
<comment type="similarity">
    <text evidence="1">Belongs to the tetrahydrofolate dehydrogenase/cyclohydrolase family.</text>
</comment>
<organism>
    <name type="scientific">Pseudomonas syringae pv. tomato (strain ATCC BAA-871 / DC3000)</name>
    <dbReference type="NCBI Taxonomy" id="223283"/>
    <lineage>
        <taxon>Bacteria</taxon>
        <taxon>Pseudomonadati</taxon>
        <taxon>Pseudomonadota</taxon>
        <taxon>Gammaproteobacteria</taxon>
        <taxon>Pseudomonadales</taxon>
        <taxon>Pseudomonadaceae</taxon>
        <taxon>Pseudomonas</taxon>
    </lineage>
</organism>
<reference key="1">
    <citation type="journal article" date="2003" name="Proc. Natl. Acad. Sci. U.S.A.">
        <title>The complete genome sequence of the Arabidopsis and tomato pathogen Pseudomonas syringae pv. tomato DC3000.</title>
        <authorList>
            <person name="Buell C.R."/>
            <person name="Joardar V."/>
            <person name="Lindeberg M."/>
            <person name="Selengut J."/>
            <person name="Paulsen I.T."/>
            <person name="Gwinn M.L."/>
            <person name="Dodson R.J."/>
            <person name="DeBoy R.T."/>
            <person name="Durkin A.S."/>
            <person name="Kolonay J.F."/>
            <person name="Madupu R."/>
            <person name="Daugherty S.C."/>
            <person name="Brinkac L.M."/>
            <person name="Beanan M.J."/>
            <person name="Haft D.H."/>
            <person name="Nelson W.C."/>
            <person name="Davidsen T.M."/>
            <person name="Zafar N."/>
            <person name="Zhou L."/>
            <person name="Liu J."/>
            <person name="Yuan Q."/>
            <person name="Khouri H.M."/>
            <person name="Fedorova N.B."/>
            <person name="Tran B."/>
            <person name="Russell D."/>
            <person name="Berry K.J."/>
            <person name="Utterback T.R."/>
            <person name="Van Aken S.E."/>
            <person name="Feldblyum T.V."/>
            <person name="D'Ascenzo M."/>
            <person name="Deng W.-L."/>
            <person name="Ramos A.R."/>
            <person name="Alfano J.R."/>
            <person name="Cartinhour S."/>
            <person name="Chatterjee A.K."/>
            <person name="Delaney T.P."/>
            <person name="Lazarowitz S.G."/>
            <person name="Martin G.B."/>
            <person name="Schneider D.J."/>
            <person name="Tang X."/>
            <person name="Bender C.L."/>
            <person name="White O."/>
            <person name="Fraser C.M."/>
            <person name="Collmer A."/>
        </authorList>
    </citation>
    <scope>NUCLEOTIDE SEQUENCE [LARGE SCALE GENOMIC DNA]</scope>
    <source>
        <strain>ATCC BAA-871 / DC3000</strain>
    </source>
</reference>
<keyword id="KW-0028">Amino-acid biosynthesis</keyword>
<keyword id="KW-0368">Histidine biosynthesis</keyword>
<keyword id="KW-0378">Hydrolase</keyword>
<keyword id="KW-0486">Methionine biosynthesis</keyword>
<keyword id="KW-0511">Multifunctional enzyme</keyword>
<keyword id="KW-0521">NADP</keyword>
<keyword id="KW-0554">One-carbon metabolism</keyword>
<keyword id="KW-0560">Oxidoreductase</keyword>
<keyword id="KW-0658">Purine biosynthesis</keyword>
<keyword id="KW-1185">Reference proteome</keyword>
<proteinExistence type="inferred from homology"/>
<feature type="chain" id="PRO_0000268452" description="Bifunctional protein FolD 1">
    <location>
        <begin position="1"/>
        <end position="284"/>
    </location>
</feature>
<feature type="binding site" evidence="1">
    <location>
        <begin position="166"/>
        <end position="168"/>
    </location>
    <ligand>
        <name>NADP(+)</name>
        <dbReference type="ChEBI" id="CHEBI:58349"/>
    </ligand>
</feature>
<feature type="binding site" evidence="1">
    <location>
        <position position="232"/>
    </location>
    <ligand>
        <name>NADP(+)</name>
        <dbReference type="ChEBI" id="CHEBI:58349"/>
    </ligand>
</feature>
<protein>
    <recommendedName>
        <fullName evidence="1">Bifunctional protein FolD 1</fullName>
    </recommendedName>
    <domain>
        <recommendedName>
            <fullName evidence="1">Methylenetetrahydrofolate dehydrogenase</fullName>
            <ecNumber evidence="1">1.5.1.5</ecNumber>
        </recommendedName>
    </domain>
    <domain>
        <recommendedName>
            <fullName evidence="1">Methenyltetrahydrofolate cyclohydrolase</fullName>
            <ecNumber evidence="1">3.5.4.9</ecNumber>
        </recommendedName>
    </domain>
</protein>